<name>HEMA_MEASE</name>
<protein>
    <recommendedName>
        <fullName>Hemagglutinin glycoprotein</fullName>
    </recommendedName>
</protein>
<accession>P08362</accession>
<keyword id="KW-0002">3D-structure</keyword>
<keyword id="KW-1015">Disulfide bond</keyword>
<keyword id="KW-0325">Glycoprotein</keyword>
<keyword id="KW-0348">Hemagglutinin</keyword>
<keyword id="KW-1032">Host cell membrane</keyword>
<keyword id="KW-1043">Host membrane</keyword>
<keyword id="KW-0945">Host-virus interaction</keyword>
<keyword id="KW-0472">Membrane</keyword>
<keyword id="KW-0735">Signal-anchor</keyword>
<keyword id="KW-0812">Transmembrane</keyword>
<keyword id="KW-1133">Transmembrane helix</keyword>
<keyword id="KW-1161">Viral attachment to host cell</keyword>
<keyword id="KW-0261">Viral envelope protein</keyword>
<keyword id="KW-0946">Virion</keyword>
<keyword id="KW-1160">Virus entry into host cell</keyword>
<comment type="function">
    <text evidence="2 5 13 16">Attaches the virus to the human SLAMF1/CD150 receptor for entry into host dendritic cells, macrophages, activated memory T cells and naive or memory B cells, thereby explaining the long immunosuppression that follows infection (PubMed:10972291). In the respiratory airways, binds to the NECTIN4 receptor for entry into the host cell. Binding of H protein to the receptor induces a conformational change that allows the F protein to trigger virion/cell membranes fusion (By similarity). The vaccine and laboratory-adapted strains use host CD46 as an alternate receptor (Probable). The high degree of interaction between H and CD46 results in down-regulation of the latter from the surface of infected cells, rendering them more sensitive to c3b-mediated complement lysis (PubMed:9811778).</text>
</comment>
<comment type="subunit">
    <text evidence="2 4 5 6 7 8 9 10 12">Homodimer; disulfide-linked (PubMed:10864661, PubMed:18003910). Further forms homotetramer (dimer of dimers) (PubMed:21217702, PubMed:23362271). Interacts (via C-terminus) with human NECTIN4 (via N-terminus); this interaction allows attachment to the respiratory epithelium and viral entry (By similarity). Interacts (via C-terminus) with human SLAMF1/CD150 (via N-terminus); this interaction allows attachment and viral entry into the CD150-expressing immune cells (PubMed:10972291, PubMed:21217702). Interacts with human CD46 antigen (via N-terminus); this interaction allows attachment and viral entry of vaccine and laboratory-adapted strains (PubMed:18026116, PubMed:20010840, PubMed:8402913).</text>
</comment>
<comment type="subcellular location">
    <subcellularLocation>
        <location evidence="14">Virion membrane</location>
        <topology evidence="14">Single-pass type II membrane protein</topology>
    </subcellularLocation>
    <subcellularLocation>
        <location evidence="1">Host cell membrane</location>
        <topology evidence="1">Single-pass type II membrane protein</topology>
    </subcellularLocation>
</comment>
<comment type="domain">
    <text evidence="10">The stalk and transmembrane regions are sufficient for tetramer formation.</text>
</comment>
<comment type="miscellaneous">
    <text evidence="2">Infecting host innate immune cells allows the virus to disseminate from the upper respiratory tract to lymphoid organs, and later back to the respiratory tract.</text>
</comment>
<comment type="similarity">
    <text evidence="14">Belongs to the paramyxoviruses hemagglutinin-neuraminidase family. Non-sialidase subfamily.</text>
</comment>
<comment type="caution">
    <text evidence="14">Morbiliviruses hemagglutinins have no neuraminidase activity.</text>
</comment>
<reference key="1">
    <citation type="journal article" date="1986" name="Virology">
        <title>The predicted primary structure of the measles virus hemagglutinin.</title>
        <authorList>
            <person name="Alkhatib G."/>
            <person name="Briedis D.J."/>
        </authorList>
    </citation>
    <scope>NUCLEOTIDE SEQUENCE [GENOMIC RNA]</scope>
</reference>
<reference key="2">
    <citation type="journal article" date="1989" name="Virology">
        <title>Mutated and hypermutated genes of persistent measles viruses which caused lethal human brain diseases.</title>
        <authorList>
            <person name="Cattaneo R."/>
            <person name="Schmid A."/>
            <person name="Spielhofer P."/>
            <person name="Kaelin K."/>
            <person name="Baczko K."/>
            <person name="Meulen V."/>
            <person name="Pardowitz J."/>
            <person name="Flanagan S."/>
            <person name="Rima B.K."/>
            <person name="Udem S.A."/>
        </authorList>
    </citation>
    <scope>NUCLEOTIDE SEQUENCE [GENOMIC RNA]</scope>
</reference>
<reference key="3">
    <citation type="journal article" date="1993" name="Cell">
        <title>The human CD46 molecule is a receptor for measles virus (Edmonston strain).</title>
        <authorList>
            <person name="Doerig R.E."/>
            <person name="Marcil A."/>
            <person name="Chopra A."/>
            <person name="Richardson C.D."/>
        </authorList>
    </citation>
    <scope>INTERACTION WITH HUMAN CD46</scope>
</reference>
<reference key="4">
    <citation type="journal article" date="1998" name="J. Virol.">
        <title>Morbillivirus downregulation of CD46.</title>
        <authorList>
            <person name="Galbraith S.E."/>
            <person name="Tiwari A."/>
            <person name="Baron M.D."/>
            <person name="Lund B.T."/>
            <person name="Barrett T."/>
            <person name="Cosby S.L."/>
        </authorList>
    </citation>
    <scope>FUNCTION</scope>
</reference>
<reference key="5">
    <citation type="journal article" date="2013" name="J. Biol. Chem.">
        <title>Mutations in the putative dimer-dimer interfaces of the measles virus hemagglutinin head domain affect membrane fusion triggering.</title>
        <authorList>
            <person name="Nakashima M."/>
            <person name="Shirogane Y."/>
            <person name="Hashiguchi T."/>
            <person name="Yanagi Y."/>
        </authorList>
    </citation>
    <scope>SUBUNIT</scope>
    <scope>DOMAIN</scope>
</reference>
<reference key="6">
    <citation type="journal article" date="2000" name="Nature">
        <title>SLAM (CDw150) is a cellular receptor for measles virus.</title>
        <authorList>
            <person name="Tatsuo H."/>
            <person name="Ono N."/>
            <person name="Tanaka K."/>
            <person name="Yanagi Y."/>
        </authorList>
    </citation>
    <scope>INTERACTION WITH HUMAN SLAMF1</scope>
    <scope>FUNCTION</scope>
</reference>
<reference key="7">
    <citation type="journal article" date="2000" name="J. Virol.">
        <title>Characterization of a region of the measles virus hemagglutinin sufficient for its dimerization.</title>
        <authorList>
            <person name="Plemper R.K."/>
            <person name="Hammond A.L."/>
            <person name="Cattaneo R."/>
        </authorList>
    </citation>
    <scope>SUBUNIT</scope>
    <scope>DISULFIDE BONDS</scope>
    <scope>MUTAGENESIS OF CYS-139 AND CYS-154</scope>
</reference>
<reference key="8">
    <citation type="journal article" date="2020" name="Front. Microbiol.">
        <title>Measles Virus Hemagglutinin Protein Establishes a Specific Interaction With the Extreme N-Terminal Region of Human Signaling Lymphocytic Activation Molecule to Enhance Infection.</title>
        <authorList>
            <person name="Seki F."/>
            <person name="Yamamoto Y."/>
            <person name="Fukuhara H."/>
            <person name="Ohishi K."/>
            <person name="Maruyama T."/>
            <person name="Maenaka K."/>
            <person name="Tokiwa H."/>
            <person name="Takeda M."/>
        </authorList>
    </citation>
    <scope>INTERACTION WITH HUMAN SLAMF1</scope>
    <source>
        <strain>CI-323</strain>
    </source>
</reference>
<reference evidence="18 19" key="9">
    <citation type="journal article" date="2007" name="Proc. Natl. Acad. Sci. U.S.A.">
        <title>Crystal structure of measles virus hemagglutinin provides insight into effective vaccines.</title>
        <authorList>
            <person name="Hashiguchi T."/>
            <person name="Kajikawa M."/>
            <person name="Maita N."/>
            <person name="Takeda M."/>
            <person name="Kuroki K."/>
            <person name="Sasaki K."/>
            <person name="Kohda D."/>
            <person name="Yanagi Y."/>
            <person name="Maenaka K."/>
        </authorList>
    </citation>
    <scope>X-RAY CRYSTALLOGRAPHY (2.60 ANGSTROMS) OF 149-617</scope>
    <scope>GLYCOSYLATION AT ASN-200 AND ASN-215</scope>
    <scope>DISULFIDE BONDS</scope>
    <scope>SUBUNIT</scope>
</reference>
<reference evidence="17" key="10">
    <citation type="journal article" date="2007" name="Nat. Struct. Mol. Biol.">
        <title>Structure of the measles virus hemagglutinin.</title>
        <authorList>
            <person name="Colf L.A."/>
            <person name="Juo Z.S."/>
            <person name="Garcia K.C."/>
        </authorList>
    </citation>
    <scope>X-RAY CRYSTALLOGRAPHY (2.70 ANGSTROMS) OF 156-617 IN COMPLEX WITH HUMAN CD46</scope>
    <scope>DISULFIDE BONDS</scope>
    <scope>GLYCOSYLATION AT ASN-200 AND ASN-215</scope>
    <scope>INTERACTION WITH HUMAN CD46</scope>
</reference>
<reference evidence="22" key="11">
    <citation type="journal article" date="2010" name="Nat. Struct. Mol. Biol.">
        <title>Structure of the measles virus hemagglutinin bound to the CD46 receptor.</title>
        <authorList>
            <person name="Santiago C."/>
            <person name="Celma M.L."/>
            <person name="Stehle T."/>
            <person name="Casasnovas J.M."/>
        </authorList>
    </citation>
    <scope>X-RAY CRYSTALLOGRAPHY (3.10 ANGSTROMS) OF 179-617 IN COMPLEX WITH HUMAN CD46</scope>
    <scope>DISULFIDE BONDS</scope>
    <scope>GLYCOSYLATION AT ASN-200 AND ASN-215</scope>
    <scope>INTERACTION WITH HUMAN CD46</scope>
</reference>
<reference evidence="20 21" key="12">
    <citation type="journal article" date="2011" name="Nat. Struct. Mol. Biol.">
        <title>Structure of the measles virus hemagglutinin bound to its cellular receptor SLAM.</title>
        <authorList>
            <person name="Hashiguchi T."/>
            <person name="Ose T."/>
            <person name="Kubota M."/>
            <person name="Maita N."/>
            <person name="Kamishikiryo J."/>
            <person name="Maenaka K."/>
            <person name="Yanagi Y."/>
        </authorList>
    </citation>
    <scope>X-RAY CRYSTALLOGRAPHY (3.55 ANGSTROMS) OF 184-607 IN COMPLEX WITH HUMAN SLAMF1</scope>
    <scope>DISULFIDE BONDS</scope>
    <scope>GLYCOSYLATION AT ASN-200 AND ASN-215</scope>
    <scope>INTERACTION WITH HUMAN SLAMF1</scope>
    <scope>SUBUNIT</scope>
</reference>
<dbReference type="EMBL" id="M14877">
    <property type="protein sequence ID" value="AAA46424.1"/>
    <property type="molecule type" value="Genomic_RNA"/>
</dbReference>
<dbReference type="EMBL" id="K01711">
    <property type="protein sequence ID" value="AAA75500.1"/>
    <property type="molecule type" value="Genomic_RNA"/>
</dbReference>
<dbReference type="PIR" id="A27006">
    <property type="entry name" value="HMNZED"/>
</dbReference>
<dbReference type="PDB" id="2RKC">
    <property type="method" value="X-ray"/>
    <property type="resolution" value="2.70 A"/>
    <property type="chains" value="A=156-617"/>
</dbReference>
<dbReference type="PDB" id="2ZB5">
    <property type="method" value="X-ray"/>
    <property type="resolution" value="3.00 A"/>
    <property type="chains" value="A=149-617"/>
</dbReference>
<dbReference type="PDB" id="2ZB6">
    <property type="method" value="X-ray"/>
    <property type="resolution" value="2.60 A"/>
    <property type="chains" value="A=149-617"/>
</dbReference>
<dbReference type="PDB" id="3ALW">
    <property type="method" value="X-ray"/>
    <property type="resolution" value="3.55 A"/>
    <property type="chains" value="A=184-607"/>
</dbReference>
<dbReference type="PDB" id="3ALX">
    <property type="method" value="X-ray"/>
    <property type="resolution" value="3.15 A"/>
    <property type="chains" value="A/B/C/D=184-607"/>
</dbReference>
<dbReference type="PDB" id="3ALZ">
    <property type="method" value="X-ray"/>
    <property type="resolution" value="4.52 A"/>
    <property type="chains" value="A=149-617"/>
</dbReference>
<dbReference type="PDB" id="3INB">
    <property type="method" value="X-ray"/>
    <property type="resolution" value="3.10 A"/>
    <property type="chains" value="A/B=179-617"/>
</dbReference>
<dbReference type="PDBsum" id="2RKC"/>
<dbReference type="PDBsum" id="2ZB5"/>
<dbReference type="PDBsum" id="2ZB6"/>
<dbReference type="PDBsum" id="3ALW"/>
<dbReference type="PDBsum" id="3ALX"/>
<dbReference type="PDBsum" id="3ALZ"/>
<dbReference type="PDBsum" id="3INB"/>
<dbReference type="SMR" id="P08362"/>
<dbReference type="DIP" id="DIP-59049N"/>
<dbReference type="IntAct" id="P08362">
    <property type="interactions" value="3"/>
</dbReference>
<dbReference type="UniLectin" id="P08362"/>
<dbReference type="GlyCosmos" id="P08362">
    <property type="glycosylation" value="5 sites, No reported glycans"/>
</dbReference>
<dbReference type="EvolutionaryTrace" id="P08362"/>
<dbReference type="Proteomes" id="UP000000833">
    <property type="component" value="Genome"/>
</dbReference>
<dbReference type="GO" id="GO:0020002">
    <property type="term" value="C:host cell plasma membrane"/>
    <property type="evidence" value="ECO:0007669"/>
    <property type="project" value="UniProtKB-SubCell"/>
</dbReference>
<dbReference type="GO" id="GO:0005886">
    <property type="term" value="C:plasma membrane"/>
    <property type="evidence" value="ECO:0000305"/>
    <property type="project" value="UniProt"/>
</dbReference>
<dbReference type="GO" id="GO:0019031">
    <property type="term" value="C:viral envelope"/>
    <property type="evidence" value="ECO:0007669"/>
    <property type="project" value="UniProtKB-KW"/>
</dbReference>
<dbReference type="GO" id="GO:0055036">
    <property type="term" value="C:virion membrane"/>
    <property type="evidence" value="ECO:0007669"/>
    <property type="project" value="UniProtKB-SubCell"/>
</dbReference>
<dbReference type="GO" id="GO:0046789">
    <property type="term" value="F:host cell surface receptor binding"/>
    <property type="evidence" value="ECO:0007669"/>
    <property type="project" value="InterPro"/>
</dbReference>
<dbReference type="GO" id="GO:0048018">
    <property type="term" value="F:receptor ligand activity"/>
    <property type="evidence" value="ECO:0000314"/>
    <property type="project" value="UniProt"/>
</dbReference>
<dbReference type="GO" id="GO:0046718">
    <property type="term" value="P:symbiont entry into host cell"/>
    <property type="evidence" value="ECO:0007669"/>
    <property type="project" value="UniProtKB-KW"/>
</dbReference>
<dbReference type="GO" id="GO:0019062">
    <property type="term" value="P:virion attachment to host cell"/>
    <property type="evidence" value="ECO:0000314"/>
    <property type="project" value="UniProtKB"/>
</dbReference>
<dbReference type="CDD" id="cd15467">
    <property type="entry name" value="MV-h"/>
    <property type="match status" value="1"/>
</dbReference>
<dbReference type="FunFam" id="2.120.10.10:FF:000007">
    <property type="entry name" value="Hemagglutinin glycoprotein"/>
    <property type="match status" value="1"/>
</dbReference>
<dbReference type="Gene3D" id="2.120.10.10">
    <property type="match status" value="1"/>
</dbReference>
<dbReference type="InterPro" id="IPR000665">
    <property type="entry name" value="Hemagglutn/HN"/>
</dbReference>
<dbReference type="InterPro" id="IPR049617">
    <property type="entry name" value="MV-h_C"/>
</dbReference>
<dbReference type="InterPro" id="IPR036278">
    <property type="entry name" value="Sialidase_sf"/>
</dbReference>
<dbReference type="Pfam" id="PF00423">
    <property type="entry name" value="HN"/>
    <property type="match status" value="1"/>
</dbReference>
<dbReference type="SUPFAM" id="SSF50939">
    <property type="entry name" value="Sialidases"/>
    <property type="match status" value="1"/>
</dbReference>
<proteinExistence type="evidence at protein level"/>
<gene>
    <name type="primary">H</name>
</gene>
<sequence>MSPQRDRINAFYKDNPHPKGSRIVINREHLMIDRPYVLLAVLFVMFLSLIGLLAIAGIRLHRAAIYTAEIHKSLSTNLDVTNSIEHQVKDVLTPLFKIIGDEVGLRTPQRFTDLVKFISDKIKFLNPDREYDFRDLTWCINPPERIKLDYDQYCADVAAEELMNALVNSTLLETRTTNQFLAVSKGNCSGPTTIRGQFSNMSLSLLDLYLGRGYNVSSIVTMTSQGMYGGTYLVEKPNLSSKRSELSQLSMYRVFEVGVIRNPGLGAPVFHMTNYLEQPVSNDLSNCMVALGELKLAALCHGEDSITIPYQGSGKGVSFQLVKLGVWKSPTDMQSWVPLSTDDPVIDRLYLSSHRGVIADNQAKWAVPTTRTDDKLRMETCFQQACKGKIQALCENPEWAPLKDNRIPSYGVLSVDLSLTVELKIKIASGFGPLITHGSGMDLYKSNHNNVYWLTIPPMKNLALGVINTLEWIPRFKVSPYLFNVPIKEAGEDCHAPTYLPAEVDGDVKLSSNLVILPGQDLQYVLATYDTSRVEHAVVYYVYSPSRSFSYFYPFRLPIKGVPIELQVECFTWDQKLWCRHFCVLADSESGGHITHSGMEGMGVSCTVTREDGTNRR</sequence>
<evidence type="ECO:0000250" key="1"/>
<evidence type="ECO:0000250" key="2">
    <source>
        <dbReference type="UniProtKB" id="Q786F2"/>
    </source>
</evidence>
<evidence type="ECO:0000255" key="3"/>
<evidence type="ECO:0000269" key="4">
    <source>
    </source>
</evidence>
<evidence type="ECO:0000269" key="5">
    <source>
    </source>
</evidence>
<evidence type="ECO:0000269" key="6">
    <source>
    </source>
</evidence>
<evidence type="ECO:0000269" key="7">
    <source>
    </source>
</evidence>
<evidence type="ECO:0000269" key="8">
    <source>
    </source>
</evidence>
<evidence type="ECO:0000269" key="9">
    <source>
    </source>
</evidence>
<evidence type="ECO:0000269" key="10">
    <source>
    </source>
</evidence>
<evidence type="ECO:0000269" key="11">
    <source>
    </source>
</evidence>
<evidence type="ECO:0000269" key="12">
    <source>
    </source>
</evidence>
<evidence type="ECO:0000269" key="13">
    <source>
    </source>
</evidence>
<evidence type="ECO:0000305" key="14"/>
<evidence type="ECO:0000305" key="15">
    <source>
    </source>
</evidence>
<evidence type="ECO:0000305" key="16">
    <source>
    </source>
</evidence>
<evidence type="ECO:0007744" key="17">
    <source>
        <dbReference type="PDB" id="2RKC"/>
    </source>
</evidence>
<evidence type="ECO:0007744" key="18">
    <source>
        <dbReference type="PDB" id="2ZB5"/>
    </source>
</evidence>
<evidence type="ECO:0007744" key="19">
    <source>
        <dbReference type="PDB" id="2ZB6"/>
    </source>
</evidence>
<evidence type="ECO:0007744" key="20">
    <source>
        <dbReference type="PDB" id="3ALW"/>
    </source>
</evidence>
<evidence type="ECO:0007744" key="21">
    <source>
        <dbReference type="PDB" id="3ALZ"/>
    </source>
</evidence>
<evidence type="ECO:0007744" key="22">
    <source>
        <dbReference type="PDB" id="3INB"/>
    </source>
</evidence>
<evidence type="ECO:0007829" key="23">
    <source>
        <dbReference type="PDB" id="2ZB5"/>
    </source>
</evidence>
<evidence type="ECO:0007829" key="24">
    <source>
        <dbReference type="PDB" id="2ZB6"/>
    </source>
</evidence>
<evidence type="ECO:0007829" key="25">
    <source>
        <dbReference type="PDB" id="3INB"/>
    </source>
</evidence>
<feature type="chain" id="PRO_0000142599" description="Hemagglutinin glycoprotein">
    <location>
        <begin position="1"/>
        <end position="617"/>
    </location>
</feature>
<feature type="topological domain" description="Intravirion" evidence="3">
    <location>
        <begin position="1"/>
        <end position="37"/>
    </location>
</feature>
<feature type="transmembrane region" description="Helical; Signal-anchor for type II membrane protein" evidence="3">
    <location>
        <begin position="38"/>
        <end position="58"/>
    </location>
</feature>
<feature type="topological domain" description="Virion surface" evidence="3">
    <location>
        <begin position="59"/>
        <end position="617"/>
    </location>
</feature>
<feature type="region of interest" description="Stalk" evidence="10">
    <location>
        <begin position="1"/>
        <end position="154"/>
    </location>
</feature>
<feature type="region of interest" description="Interaction with host NECTIN4 receptor" evidence="2">
    <location>
        <begin position="458"/>
        <end position="543"/>
    </location>
</feature>
<feature type="site" description="Interaction with host SLAMF1 receptor" evidence="9">
    <location>
        <position position="483"/>
    </location>
</feature>
<feature type="site" description="Interaction with host SLAMF1 receptor" evidence="9">
    <location>
        <position position="505"/>
    </location>
</feature>
<feature type="site" description="Interaction with host SLAMF1 receptor" evidence="9">
    <location>
        <position position="507"/>
    </location>
</feature>
<feature type="site" description="Interaction with host SLAMF1 receptor" evidence="9">
    <location>
        <position position="524"/>
    </location>
</feature>
<feature type="site" description="Interaction with host SLAMF1 receptor" evidence="9">
    <location>
        <position position="530"/>
    </location>
</feature>
<feature type="site" description="Interaction with host SLAMF1 receptor" evidence="9">
    <location>
        <position position="533"/>
    </location>
</feature>
<feature type="site" description="Interaction with host SLAMF1 receptor" evidence="9">
    <location>
        <position position="541"/>
    </location>
</feature>
<feature type="site" description="Interaction with host SLAMF1 receptor" evidence="9">
    <location>
        <position position="543"/>
    </location>
</feature>
<feature type="site" description="Interaction with host SLAMF1 receptor" evidence="9">
    <location>
        <position position="545"/>
    </location>
</feature>
<feature type="site" description="Interaction with host SLAMF1 receptor during cell-cell fusion" evidence="11">
    <location>
        <position position="549"/>
    </location>
</feature>
<feature type="site" description="Interaction with host SLAMF1 receptor" evidence="9">
    <location>
        <position position="552"/>
    </location>
</feature>
<feature type="site" description="Interaction with host SLAMF1 receptor" evidence="9">
    <location>
        <position position="554"/>
    </location>
</feature>
<feature type="glycosylation site" description="N-linked (GlcNAc...) asparagine; by host" evidence="3">
    <location>
        <position position="168"/>
    </location>
</feature>
<feature type="glycosylation site" description="N-linked (GlcNAc...) asparagine; by host" evidence="3">
    <location>
        <position position="187"/>
    </location>
</feature>
<feature type="glycosylation site" description="N-linked (GlcNAc...) asparagine; by host" evidence="6 7 8 9 17 18 19 20 21 22">
    <location>
        <position position="200"/>
    </location>
</feature>
<feature type="glycosylation site" description="N-linked (GlcNAc...) asparagine; by host" evidence="6 7 8 9 17 18 20 21 22">
    <location>
        <position position="215"/>
    </location>
</feature>
<feature type="glycosylation site" description="N-linked (GlcNAc...) asparagine; by host" evidence="3">
    <location>
        <position position="238"/>
    </location>
</feature>
<feature type="disulfide bond" description="Interchain" evidence="15">
    <location>
        <position position="139"/>
    </location>
</feature>
<feature type="disulfide bond" description="Interchain" evidence="6 15">
    <location>
        <position position="154"/>
    </location>
</feature>
<feature type="disulfide bond" evidence="6 8 9 18 19 20 21 22">
    <location>
        <begin position="188"/>
        <end position="606"/>
    </location>
</feature>
<feature type="disulfide bond" evidence="6 7 8 9 17 18 19 20 21 22">
    <location>
        <begin position="287"/>
        <end position="300"/>
    </location>
</feature>
<feature type="disulfide bond" evidence="6 7 8 9 17 18 19 20 21 22">
    <location>
        <begin position="381"/>
        <end position="494"/>
    </location>
</feature>
<feature type="disulfide bond" evidence="6 7 8 9 17 18 19 20 21 22">
    <location>
        <begin position="386"/>
        <end position="394"/>
    </location>
</feature>
<feature type="disulfide bond" evidence="6 7 8 9 17 18 19 20 21 22">
    <location>
        <begin position="570"/>
        <end position="579"/>
    </location>
</feature>
<feature type="mutagenesis site" description="Complete loss of dimerization; when associated with C-154 C-154." evidence="4">
    <original>C</original>
    <variation>S</variation>
    <location>
        <position position="139"/>
    </location>
</feature>
<feature type="mutagenesis site" description="Complete loss of dimerization; when associated with C-139." evidence="4">
    <original>C</original>
    <variation>S</variation>
    <location>
        <position position="154"/>
    </location>
</feature>
<feature type="helix" evidence="24">
    <location>
        <begin position="159"/>
        <end position="163"/>
    </location>
</feature>
<feature type="strand" evidence="24">
    <location>
        <begin position="189"/>
        <end position="198"/>
    </location>
</feature>
<feature type="helix" evidence="24">
    <location>
        <begin position="205"/>
        <end position="211"/>
    </location>
</feature>
<feature type="strand" evidence="24">
    <location>
        <begin position="215"/>
        <end position="224"/>
    </location>
</feature>
<feature type="strand" evidence="24">
    <location>
        <begin position="227"/>
        <end position="236"/>
    </location>
</feature>
<feature type="strand" evidence="24">
    <location>
        <begin position="250"/>
        <end position="261"/>
    </location>
</feature>
<feature type="strand" evidence="24">
    <location>
        <begin position="264"/>
        <end position="267"/>
    </location>
</feature>
<feature type="strand" evidence="24">
    <location>
        <begin position="269"/>
        <end position="279"/>
    </location>
</feature>
<feature type="strand" evidence="25">
    <location>
        <begin position="281"/>
        <end position="283"/>
    </location>
</feature>
<feature type="strand" evidence="24">
    <location>
        <begin position="286"/>
        <end position="292"/>
    </location>
</feature>
<feature type="strand" evidence="24">
    <location>
        <begin position="295"/>
        <end position="307"/>
    </location>
</feature>
<feature type="strand" evidence="24">
    <location>
        <begin position="313"/>
        <end position="315"/>
    </location>
</feature>
<feature type="strand" evidence="24">
    <location>
        <begin position="318"/>
        <end position="327"/>
    </location>
</feature>
<feature type="strand" evidence="24">
    <location>
        <begin position="333"/>
        <end position="339"/>
    </location>
</feature>
<feature type="strand" evidence="24">
    <location>
        <begin position="344"/>
        <end position="350"/>
    </location>
</feature>
<feature type="strand" evidence="24">
    <location>
        <begin position="355"/>
        <end position="359"/>
    </location>
</feature>
<feature type="strand" evidence="24">
    <location>
        <begin position="362"/>
        <end position="371"/>
    </location>
</feature>
<feature type="helix" evidence="24">
    <location>
        <begin position="374"/>
        <end position="385"/>
    </location>
</feature>
<feature type="strand" evidence="23">
    <location>
        <begin position="387"/>
        <end position="389"/>
    </location>
</feature>
<feature type="helix" evidence="24">
    <location>
        <begin position="391"/>
        <end position="395"/>
    </location>
</feature>
<feature type="helix" evidence="24">
    <location>
        <begin position="400"/>
        <end position="403"/>
    </location>
</feature>
<feature type="strand" evidence="24">
    <location>
        <begin position="409"/>
        <end position="418"/>
    </location>
</feature>
<feature type="turn" evidence="23">
    <location>
        <begin position="420"/>
        <end position="422"/>
    </location>
</feature>
<feature type="strand" evidence="24">
    <location>
        <begin position="425"/>
        <end position="430"/>
    </location>
</feature>
<feature type="strand" evidence="24">
    <location>
        <begin position="442"/>
        <end position="445"/>
    </location>
</feature>
<feature type="strand" evidence="24">
    <location>
        <begin position="451"/>
        <end position="456"/>
    </location>
</feature>
<feature type="turn" evidence="25">
    <location>
        <begin position="460"/>
        <end position="462"/>
    </location>
</feature>
<feature type="strand" evidence="24">
    <location>
        <begin position="466"/>
        <end position="471"/>
    </location>
</feature>
<feature type="strand" evidence="24">
    <location>
        <begin position="473"/>
        <end position="475"/>
    </location>
</feature>
<feature type="strand" evidence="24">
    <location>
        <begin position="477"/>
        <end position="486"/>
    </location>
</feature>
<feature type="strand" evidence="24">
    <location>
        <begin position="488"/>
        <end position="493"/>
    </location>
</feature>
<feature type="strand" evidence="24">
    <location>
        <begin position="495"/>
        <end position="497"/>
    </location>
</feature>
<feature type="turn" evidence="25">
    <location>
        <begin position="504"/>
        <end position="506"/>
    </location>
</feature>
<feature type="strand" evidence="24">
    <location>
        <begin position="509"/>
        <end position="511"/>
    </location>
</feature>
<feature type="strand" evidence="24">
    <location>
        <begin position="519"/>
        <end position="521"/>
    </location>
</feature>
<feature type="strand" evidence="24">
    <location>
        <begin position="524"/>
        <end position="530"/>
    </location>
</feature>
<feature type="strand" evidence="25">
    <location>
        <begin position="531"/>
        <end position="535"/>
    </location>
</feature>
<feature type="strand" evidence="24">
    <location>
        <begin position="538"/>
        <end position="543"/>
    </location>
</feature>
<feature type="strand" evidence="24">
    <location>
        <begin position="548"/>
        <end position="552"/>
    </location>
</feature>
<feature type="strand" evidence="24">
    <location>
        <begin position="565"/>
        <end position="572"/>
    </location>
</feature>
<feature type="strand" evidence="24">
    <location>
        <begin position="574"/>
        <end position="584"/>
    </location>
</feature>
<feature type="turn" evidence="24">
    <location>
        <begin position="588"/>
        <end position="590"/>
    </location>
</feature>
<feature type="strand" evidence="24">
    <location>
        <begin position="595"/>
        <end position="606"/>
    </location>
</feature>
<organism>
    <name type="scientific">Measles virus (strain Edmonston)</name>
    <name type="common">MeV</name>
    <name type="synonym">Subacute sclerose panencephalitis virus</name>
    <dbReference type="NCBI Taxonomy" id="11235"/>
    <lineage>
        <taxon>Viruses</taxon>
        <taxon>Riboviria</taxon>
        <taxon>Orthornavirae</taxon>
        <taxon>Negarnaviricota</taxon>
        <taxon>Haploviricotina</taxon>
        <taxon>Monjiviricetes</taxon>
        <taxon>Mononegavirales</taxon>
        <taxon>Paramyxoviridae</taxon>
        <taxon>Orthoparamyxovirinae</taxon>
        <taxon>Morbillivirus</taxon>
        <taxon>Morbillivirus hominis</taxon>
        <taxon>Measles morbillivirus</taxon>
    </lineage>
</organism>
<organismHost>
    <name type="scientific">Homo sapiens</name>
    <name type="common">Human</name>
    <dbReference type="NCBI Taxonomy" id="9606"/>
</organismHost>